<feature type="chain" id="PRO_1000186446" description="Bifunctional protein GlmU">
    <location>
        <begin position="1"/>
        <end position="456"/>
    </location>
</feature>
<feature type="region of interest" description="Pyrophosphorylase" evidence="1">
    <location>
        <begin position="1"/>
        <end position="229"/>
    </location>
</feature>
<feature type="region of interest" description="Linker" evidence="1">
    <location>
        <begin position="230"/>
        <end position="250"/>
    </location>
</feature>
<feature type="region of interest" description="N-acetyltransferase" evidence="1">
    <location>
        <begin position="251"/>
        <end position="456"/>
    </location>
</feature>
<feature type="active site" description="Proton acceptor" evidence="1">
    <location>
        <position position="363"/>
    </location>
</feature>
<feature type="binding site" evidence="1">
    <location>
        <begin position="11"/>
        <end position="14"/>
    </location>
    <ligand>
        <name>UDP-N-acetyl-alpha-D-glucosamine</name>
        <dbReference type="ChEBI" id="CHEBI:57705"/>
    </ligand>
</feature>
<feature type="binding site" evidence="1">
    <location>
        <position position="25"/>
    </location>
    <ligand>
        <name>UDP-N-acetyl-alpha-D-glucosamine</name>
        <dbReference type="ChEBI" id="CHEBI:57705"/>
    </ligand>
</feature>
<feature type="binding site" evidence="1">
    <location>
        <position position="76"/>
    </location>
    <ligand>
        <name>UDP-N-acetyl-alpha-D-glucosamine</name>
        <dbReference type="ChEBI" id="CHEBI:57705"/>
    </ligand>
</feature>
<feature type="binding site" evidence="1">
    <location>
        <begin position="81"/>
        <end position="82"/>
    </location>
    <ligand>
        <name>UDP-N-acetyl-alpha-D-glucosamine</name>
        <dbReference type="ChEBI" id="CHEBI:57705"/>
    </ligand>
</feature>
<feature type="binding site" evidence="1">
    <location>
        <begin position="103"/>
        <end position="105"/>
    </location>
    <ligand>
        <name>UDP-N-acetyl-alpha-D-glucosamine</name>
        <dbReference type="ChEBI" id="CHEBI:57705"/>
    </ligand>
</feature>
<feature type="binding site" evidence="1">
    <location>
        <position position="105"/>
    </location>
    <ligand>
        <name>Mg(2+)</name>
        <dbReference type="ChEBI" id="CHEBI:18420"/>
    </ligand>
</feature>
<feature type="binding site" evidence="1">
    <location>
        <position position="140"/>
    </location>
    <ligand>
        <name>UDP-N-acetyl-alpha-D-glucosamine</name>
        <dbReference type="ChEBI" id="CHEBI:57705"/>
    </ligand>
</feature>
<feature type="binding site" evidence="1">
    <location>
        <position position="154"/>
    </location>
    <ligand>
        <name>UDP-N-acetyl-alpha-D-glucosamine</name>
        <dbReference type="ChEBI" id="CHEBI:57705"/>
    </ligand>
</feature>
<feature type="binding site" evidence="1">
    <location>
        <position position="169"/>
    </location>
    <ligand>
        <name>UDP-N-acetyl-alpha-D-glucosamine</name>
        <dbReference type="ChEBI" id="CHEBI:57705"/>
    </ligand>
</feature>
<feature type="binding site" evidence="1">
    <location>
        <position position="227"/>
    </location>
    <ligand>
        <name>Mg(2+)</name>
        <dbReference type="ChEBI" id="CHEBI:18420"/>
    </ligand>
</feature>
<feature type="binding site" evidence="1">
    <location>
        <position position="227"/>
    </location>
    <ligand>
        <name>UDP-N-acetyl-alpha-D-glucosamine</name>
        <dbReference type="ChEBI" id="CHEBI:57705"/>
    </ligand>
</feature>
<feature type="binding site" evidence="1">
    <location>
        <position position="333"/>
    </location>
    <ligand>
        <name>UDP-N-acetyl-alpha-D-glucosamine</name>
        <dbReference type="ChEBI" id="CHEBI:57705"/>
    </ligand>
</feature>
<feature type="binding site" evidence="1">
    <location>
        <position position="351"/>
    </location>
    <ligand>
        <name>UDP-N-acetyl-alpha-D-glucosamine</name>
        <dbReference type="ChEBI" id="CHEBI:57705"/>
    </ligand>
</feature>
<feature type="binding site" evidence="1">
    <location>
        <position position="366"/>
    </location>
    <ligand>
        <name>UDP-N-acetyl-alpha-D-glucosamine</name>
        <dbReference type="ChEBI" id="CHEBI:57705"/>
    </ligand>
</feature>
<feature type="binding site" evidence="1">
    <location>
        <position position="377"/>
    </location>
    <ligand>
        <name>UDP-N-acetyl-alpha-D-glucosamine</name>
        <dbReference type="ChEBI" id="CHEBI:57705"/>
    </ligand>
</feature>
<feature type="binding site" evidence="1">
    <location>
        <position position="380"/>
    </location>
    <ligand>
        <name>acetyl-CoA</name>
        <dbReference type="ChEBI" id="CHEBI:57288"/>
    </ligand>
</feature>
<feature type="binding site" evidence="1">
    <location>
        <begin position="386"/>
        <end position="387"/>
    </location>
    <ligand>
        <name>acetyl-CoA</name>
        <dbReference type="ChEBI" id="CHEBI:57288"/>
    </ligand>
</feature>
<feature type="binding site" evidence="1">
    <location>
        <position position="405"/>
    </location>
    <ligand>
        <name>acetyl-CoA</name>
        <dbReference type="ChEBI" id="CHEBI:57288"/>
    </ligand>
</feature>
<feature type="binding site" evidence="1">
    <location>
        <position position="423"/>
    </location>
    <ligand>
        <name>acetyl-CoA</name>
        <dbReference type="ChEBI" id="CHEBI:57288"/>
    </ligand>
</feature>
<feature type="binding site" evidence="1">
    <location>
        <position position="440"/>
    </location>
    <ligand>
        <name>acetyl-CoA</name>
        <dbReference type="ChEBI" id="CHEBI:57288"/>
    </ligand>
</feature>
<sequence length="456" mass="49167">MLNNAMSVVILAAGKGTRMYSDLPKVLHTLAGKAMVQHVIDAANELGAAHVHLVYGHGGDLLKQALKDDNLNWVLQAEQLGTGHAMQQAAPFFADDEDILMLYGDVPLISVETLQRLRDAKPQGGIGLLTVKLDDPTGYGRITRENGKVTGIVEHKDATDEQRQIQEINTGILIANGADMKRWLAKLTNNNAQGEYYITDIIALAYQEGREIVAVHPQRLSEVEGVNNRLQLSRLERVYQSEQAEKLLLAGVMLRDPARFDLRGTLTHGRDVEIDTNVIIEGNVTLGNRVKIGTGCVIKNSVIGDDCEISPYTVVEDANLAAACTIGPFARLRPGAELLEGAHVGNFVEMKKARLGKGSKAGHLTYLGDAEIGDNVNIGAGTITCNYDGANKFKTIIGDDVFVGSDTQLVAPVTVGKGATIAAGTTVTRNVGENALAISRVPQTQKEGWRRPVKKK</sequence>
<protein>
    <recommendedName>
        <fullName evidence="1">Bifunctional protein GlmU</fullName>
    </recommendedName>
    <domain>
        <recommendedName>
            <fullName evidence="1">UDP-N-acetylglucosamine pyrophosphorylase</fullName>
            <ecNumber evidence="1">2.7.7.23</ecNumber>
        </recommendedName>
        <alternativeName>
            <fullName evidence="1">N-acetylglucosamine-1-phosphate uridyltransferase</fullName>
        </alternativeName>
    </domain>
    <domain>
        <recommendedName>
            <fullName evidence="1">Glucosamine-1-phosphate N-acetyltransferase</fullName>
            <ecNumber evidence="1">2.3.1.157</ecNumber>
        </recommendedName>
    </domain>
</protein>
<name>GLMU_ECO81</name>
<proteinExistence type="inferred from homology"/>
<organism>
    <name type="scientific">Escherichia coli O81 (strain ED1a)</name>
    <dbReference type="NCBI Taxonomy" id="585397"/>
    <lineage>
        <taxon>Bacteria</taxon>
        <taxon>Pseudomonadati</taxon>
        <taxon>Pseudomonadota</taxon>
        <taxon>Gammaproteobacteria</taxon>
        <taxon>Enterobacterales</taxon>
        <taxon>Enterobacteriaceae</taxon>
        <taxon>Escherichia</taxon>
    </lineage>
</organism>
<gene>
    <name evidence="1" type="primary">glmU</name>
    <name type="ordered locus">ECED1_4420</name>
</gene>
<dbReference type="EC" id="2.7.7.23" evidence="1"/>
<dbReference type="EC" id="2.3.1.157" evidence="1"/>
<dbReference type="EMBL" id="CU928162">
    <property type="protein sequence ID" value="CAR10540.2"/>
    <property type="molecule type" value="Genomic_DNA"/>
</dbReference>
<dbReference type="RefSeq" id="WP_000933746.1">
    <property type="nucleotide sequence ID" value="NC_011745.1"/>
</dbReference>
<dbReference type="SMR" id="B7N2G9"/>
<dbReference type="KEGG" id="ecq:ECED1_4420"/>
<dbReference type="HOGENOM" id="CLU_029499_15_2_6"/>
<dbReference type="UniPathway" id="UPA00113">
    <property type="reaction ID" value="UER00532"/>
</dbReference>
<dbReference type="UniPathway" id="UPA00113">
    <property type="reaction ID" value="UER00533"/>
</dbReference>
<dbReference type="UniPathway" id="UPA00973"/>
<dbReference type="Proteomes" id="UP000000748">
    <property type="component" value="Chromosome"/>
</dbReference>
<dbReference type="GO" id="GO:0005737">
    <property type="term" value="C:cytoplasm"/>
    <property type="evidence" value="ECO:0007669"/>
    <property type="project" value="UniProtKB-SubCell"/>
</dbReference>
<dbReference type="GO" id="GO:0016020">
    <property type="term" value="C:membrane"/>
    <property type="evidence" value="ECO:0007669"/>
    <property type="project" value="GOC"/>
</dbReference>
<dbReference type="GO" id="GO:0019134">
    <property type="term" value="F:glucosamine-1-phosphate N-acetyltransferase activity"/>
    <property type="evidence" value="ECO:0007669"/>
    <property type="project" value="UniProtKB-UniRule"/>
</dbReference>
<dbReference type="GO" id="GO:0000287">
    <property type="term" value="F:magnesium ion binding"/>
    <property type="evidence" value="ECO:0007669"/>
    <property type="project" value="UniProtKB-UniRule"/>
</dbReference>
<dbReference type="GO" id="GO:0003977">
    <property type="term" value="F:UDP-N-acetylglucosamine diphosphorylase activity"/>
    <property type="evidence" value="ECO:0007669"/>
    <property type="project" value="UniProtKB-UniRule"/>
</dbReference>
<dbReference type="GO" id="GO:0000902">
    <property type="term" value="P:cell morphogenesis"/>
    <property type="evidence" value="ECO:0007669"/>
    <property type="project" value="UniProtKB-UniRule"/>
</dbReference>
<dbReference type="GO" id="GO:0071555">
    <property type="term" value="P:cell wall organization"/>
    <property type="evidence" value="ECO:0007669"/>
    <property type="project" value="UniProtKB-KW"/>
</dbReference>
<dbReference type="GO" id="GO:0009245">
    <property type="term" value="P:lipid A biosynthetic process"/>
    <property type="evidence" value="ECO:0007669"/>
    <property type="project" value="UniProtKB-UniRule"/>
</dbReference>
<dbReference type="GO" id="GO:0009252">
    <property type="term" value="P:peptidoglycan biosynthetic process"/>
    <property type="evidence" value="ECO:0007669"/>
    <property type="project" value="UniProtKB-UniRule"/>
</dbReference>
<dbReference type="GO" id="GO:0008360">
    <property type="term" value="P:regulation of cell shape"/>
    <property type="evidence" value="ECO:0007669"/>
    <property type="project" value="UniProtKB-KW"/>
</dbReference>
<dbReference type="GO" id="GO:0006048">
    <property type="term" value="P:UDP-N-acetylglucosamine biosynthetic process"/>
    <property type="evidence" value="ECO:0007669"/>
    <property type="project" value="UniProtKB-UniPathway"/>
</dbReference>
<dbReference type="CDD" id="cd02540">
    <property type="entry name" value="GT2_GlmU_N_bac"/>
    <property type="match status" value="1"/>
</dbReference>
<dbReference type="CDD" id="cd03353">
    <property type="entry name" value="LbH_GlmU_C"/>
    <property type="match status" value="1"/>
</dbReference>
<dbReference type="FunFam" id="2.160.10.10:FF:000011">
    <property type="entry name" value="Bifunctional protein GlmU"/>
    <property type="match status" value="1"/>
</dbReference>
<dbReference type="FunFam" id="3.90.550.10:FF:000006">
    <property type="entry name" value="Bifunctional protein GlmU"/>
    <property type="match status" value="1"/>
</dbReference>
<dbReference type="Gene3D" id="2.160.10.10">
    <property type="entry name" value="Hexapeptide repeat proteins"/>
    <property type="match status" value="1"/>
</dbReference>
<dbReference type="Gene3D" id="3.90.550.10">
    <property type="entry name" value="Spore Coat Polysaccharide Biosynthesis Protein SpsA, Chain A"/>
    <property type="match status" value="1"/>
</dbReference>
<dbReference type="HAMAP" id="MF_01631">
    <property type="entry name" value="GlmU"/>
    <property type="match status" value="1"/>
</dbReference>
<dbReference type="InterPro" id="IPR005882">
    <property type="entry name" value="Bifunctional_GlmU"/>
</dbReference>
<dbReference type="InterPro" id="IPR050065">
    <property type="entry name" value="GlmU-like"/>
</dbReference>
<dbReference type="InterPro" id="IPR038009">
    <property type="entry name" value="GlmU_C_LbH"/>
</dbReference>
<dbReference type="InterPro" id="IPR001451">
    <property type="entry name" value="Hexapep"/>
</dbReference>
<dbReference type="InterPro" id="IPR018357">
    <property type="entry name" value="Hexapep_transf_CS"/>
</dbReference>
<dbReference type="InterPro" id="IPR025877">
    <property type="entry name" value="MobA-like_NTP_Trfase"/>
</dbReference>
<dbReference type="InterPro" id="IPR029044">
    <property type="entry name" value="Nucleotide-diphossugar_trans"/>
</dbReference>
<dbReference type="InterPro" id="IPR011004">
    <property type="entry name" value="Trimer_LpxA-like_sf"/>
</dbReference>
<dbReference type="NCBIfam" id="TIGR01173">
    <property type="entry name" value="glmU"/>
    <property type="match status" value="1"/>
</dbReference>
<dbReference type="NCBIfam" id="NF006986">
    <property type="entry name" value="PRK09451.1"/>
    <property type="match status" value="1"/>
</dbReference>
<dbReference type="PANTHER" id="PTHR43584:SF3">
    <property type="entry name" value="BIFUNCTIONAL PROTEIN GLMU"/>
    <property type="match status" value="1"/>
</dbReference>
<dbReference type="PANTHER" id="PTHR43584">
    <property type="entry name" value="NUCLEOTIDYL TRANSFERASE"/>
    <property type="match status" value="1"/>
</dbReference>
<dbReference type="Pfam" id="PF00132">
    <property type="entry name" value="Hexapep"/>
    <property type="match status" value="2"/>
</dbReference>
<dbReference type="Pfam" id="PF12804">
    <property type="entry name" value="NTP_transf_3"/>
    <property type="match status" value="1"/>
</dbReference>
<dbReference type="SUPFAM" id="SSF53448">
    <property type="entry name" value="Nucleotide-diphospho-sugar transferases"/>
    <property type="match status" value="1"/>
</dbReference>
<dbReference type="SUPFAM" id="SSF51161">
    <property type="entry name" value="Trimeric LpxA-like enzymes"/>
    <property type="match status" value="1"/>
</dbReference>
<dbReference type="PROSITE" id="PS00101">
    <property type="entry name" value="HEXAPEP_TRANSFERASES"/>
    <property type="match status" value="1"/>
</dbReference>
<evidence type="ECO:0000255" key="1">
    <source>
        <dbReference type="HAMAP-Rule" id="MF_01631"/>
    </source>
</evidence>
<accession>B7N2G9</accession>
<comment type="function">
    <text evidence="1">Catalyzes the last two sequential reactions in the de novo biosynthetic pathway for UDP-N-acetylglucosamine (UDP-GlcNAc). The C-terminal domain catalyzes the transfer of acetyl group from acetyl coenzyme A to glucosamine-1-phosphate (GlcN-1-P) to produce N-acetylglucosamine-1-phosphate (GlcNAc-1-P), which is converted into UDP-GlcNAc by the transfer of uridine 5-monophosphate (from uridine 5-triphosphate), a reaction catalyzed by the N-terminal domain.</text>
</comment>
<comment type="catalytic activity">
    <reaction evidence="1">
        <text>alpha-D-glucosamine 1-phosphate + acetyl-CoA = N-acetyl-alpha-D-glucosamine 1-phosphate + CoA + H(+)</text>
        <dbReference type="Rhea" id="RHEA:13725"/>
        <dbReference type="ChEBI" id="CHEBI:15378"/>
        <dbReference type="ChEBI" id="CHEBI:57287"/>
        <dbReference type="ChEBI" id="CHEBI:57288"/>
        <dbReference type="ChEBI" id="CHEBI:57776"/>
        <dbReference type="ChEBI" id="CHEBI:58516"/>
        <dbReference type="EC" id="2.3.1.157"/>
    </reaction>
</comment>
<comment type="catalytic activity">
    <reaction evidence="1">
        <text>N-acetyl-alpha-D-glucosamine 1-phosphate + UTP + H(+) = UDP-N-acetyl-alpha-D-glucosamine + diphosphate</text>
        <dbReference type="Rhea" id="RHEA:13509"/>
        <dbReference type="ChEBI" id="CHEBI:15378"/>
        <dbReference type="ChEBI" id="CHEBI:33019"/>
        <dbReference type="ChEBI" id="CHEBI:46398"/>
        <dbReference type="ChEBI" id="CHEBI:57705"/>
        <dbReference type="ChEBI" id="CHEBI:57776"/>
        <dbReference type="EC" id="2.7.7.23"/>
    </reaction>
</comment>
<comment type="cofactor">
    <cofactor evidence="1">
        <name>Mg(2+)</name>
        <dbReference type="ChEBI" id="CHEBI:18420"/>
    </cofactor>
    <text evidence="1">Binds 1 Mg(2+) ion per subunit.</text>
</comment>
<comment type="pathway">
    <text evidence="1">Nucleotide-sugar biosynthesis; UDP-N-acetyl-alpha-D-glucosamine biosynthesis; N-acetyl-alpha-D-glucosamine 1-phosphate from alpha-D-glucosamine 6-phosphate (route II): step 2/2.</text>
</comment>
<comment type="pathway">
    <text evidence="1">Nucleotide-sugar biosynthesis; UDP-N-acetyl-alpha-D-glucosamine biosynthesis; UDP-N-acetyl-alpha-D-glucosamine from N-acetyl-alpha-D-glucosamine 1-phosphate: step 1/1.</text>
</comment>
<comment type="pathway">
    <text evidence="1">Bacterial outer membrane biogenesis; LPS lipid A biosynthesis.</text>
</comment>
<comment type="subunit">
    <text evidence="1">Homotrimer.</text>
</comment>
<comment type="subcellular location">
    <subcellularLocation>
        <location evidence="1">Cytoplasm</location>
    </subcellularLocation>
</comment>
<comment type="similarity">
    <text evidence="1">In the N-terminal section; belongs to the N-acetylglucosamine-1-phosphate uridyltransferase family.</text>
</comment>
<comment type="similarity">
    <text evidence="1">In the C-terminal section; belongs to the transferase hexapeptide repeat family.</text>
</comment>
<reference key="1">
    <citation type="journal article" date="2009" name="PLoS Genet.">
        <title>Organised genome dynamics in the Escherichia coli species results in highly diverse adaptive paths.</title>
        <authorList>
            <person name="Touchon M."/>
            <person name="Hoede C."/>
            <person name="Tenaillon O."/>
            <person name="Barbe V."/>
            <person name="Baeriswyl S."/>
            <person name="Bidet P."/>
            <person name="Bingen E."/>
            <person name="Bonacorsi S."/>
            <person name="Bouchier C."/>
            <person name="Bouvet O."/>
            <person name="Calteau A."/>
            <person name="Chiapello H."/>
            <person name="Clermont O."/>
            <person name="Cruveiller S."/>
            <person name="Danchin A."/>
            <person name="Diard M."/>
            <person name="Dossat C."/>
            <person name="Karoui M.E."/>
            <person name="Frapy E."/>
            <person name="Garry L."/>
            <person name="Ghigo J.M."/>
            <person name="Gilles A.M."/>
            <person name="Johnson J."/>
            <person name="Le Bouguenec C."/>
            <person name="Lescat M."/>
            <person name="Mangenot S."/>
            <person name="Martinez-Jehanne V."/>
            <person name="Matic I."/>
            <person name="Nassif X."/>
            <person name="Oztas S."/>
            <person name="Petit M.A."/>
            <person name="Pichon C."/>
            <person name="Rouy Z."/>
            <person name="Ruf C.S."/>
            <person name="Schneider D."/>
            <person name="Tourret J."/>
            <person name="Vacherie B."/>
            <person name="Vallenet D."/>
            <person name="Medigue C."/>
            <person name="Rocha E.P.C."/>
            <person name="Denamur E."/>
        </authorList>
    </citation>
    <scope>NUCLEOTIDE SEQUENCE [LARGE SCALE GENOMIC DNA]</scope>
    <source>
        <strain>ED1a</strain>
    </source>
</reference>
<keyword id="KW-0012">Acyltransferase</keyword>
<keyword id="KW-0133">Cell shape</keyword>
<keyword id="KW-0961">Cell wall biogenesis/degradation</keyword>
<keyword id="KW-0963">Cytoplasm</keyword>
<keyword id="KW-0460">Magnesium</keyword>
<keyword id="KW-0479">Metal-binding</keyword>
<keyword id="KW-0511">Multifunctional enzyme</keyword>
<keyword id="KW-0548">Nucleotidyltransferase</keyword>
<keyword id="KW-0573">Peptidoglycan synthesis</keyword>
<keyword id="KW-0677">Repeat</keyword>
<keyword id="KW-0808">Transferase</keyword>